<accession>Q74FE1</accession>
<proteinExistence type="inferred from homology"/>
<dbReference type="EMBL" id="AE017180">
    <property type="protein sequence ID" value="AAR33998.1"/>
    <property type="molecule type" value="Genomic_DNA"/>
</dbReference>
<dbReference type="RefSeq" id="NP_951725.1">
    <property type="nucleotide sequence ID" value="NC_002939.5"/>
</dbReference>
<dbReference type="RefSeq" id="WP_010941329.1">
    <property type="nucleotide sequence ID" value="NC_002939.5"/>
</dbReference>
<dbReference type="SMR" id="Q74FE1"/>
<dbReference type="FunCoup" id="Q74FE1">
    <property type="interactions" value="736"/>
</dbReference>
<dbReference type="STRING" id="243231.GSU0668"/>
<dbReference type="EnsemblBacteria" id="AAR33998">
    <property type="protein sequence ID" value="AAR33998"/>
    <property type="gene ID" value="GSU0668"/>
</dbReference>
<dbReference type="KEGG" id="gsu:GSU0668"/>
<dbReference type="PATRIC" id="fig|243231.5.peg.664"/>
<dbReference type="eggNOG" id="COG0359">
    <property type="taxonomic scope" value="Bacteria"/>
</dbReference>
<dbReference type="HOGENOM" id="CLU_078938_3_0_7"/>
<dbReference type="InParanoid" id="Q74FE1"/>
<dbReference type="OrthoDB" id="9788336at2"/>
<dbReference type="Proteomes" id="UP000000577">
    <property type="component" value="Chromosome"/>
</dbReference>
<dbReference type="GO" id="GO:0022625">
    <property type="term" value="C:cytosolic large ribosomal subunit"/>
    <property type="evidence" value="ECO:0000318"/>
    <property type="project" value="GO_Central"/>
</dbReference>
<dbReference type="GO" id="GO:0019843">
    <property type="term" value="F:rRNA binding"/>
    <property type="evidence" value="ECO:0007669"/>
    <property type="project" value="UniProtKB-UniRule"/>
</dbReference>
<dbReference type="GO" id="GO:0003735">
    <property type="term" value="F:structural constituent of ribosome"/>
    <property type="evidence" value="ECO:0007669"/>
    <property type="project" value="InterPro"/>
</dbReference>
<dbReference type="GO" id="GO:0006412">
    <property type="term" value="P:translation"/>
    <property type="evidence" value="ECO:0007669"/>
    <property type="project" value="UniProtKB-UniRule"/>
</dbReference>
<dbReference type="FunFam" id="3.10.430.100:FF:000006">
    <property type="entry name" value="50S ribosomal protein L9"/>
    <property type="match status" value="1"/>
</dbReference>
<dbReference type="FunFam" id="3.40.5.10:FF:000002">
    <property type="entry name" value="50S ribosomal protein L9"/>
    <property type="match status" value="1"/>
</dbReference>
<dbReference type="Gene3D" id="3.10.430.100">
    <property type="entry name" value="Ribosomal protein L9, C-terminal domain"/>
    <property type="match status" value="1"/>
</dbReference>
<dbReference type="Gene3D" id="3.40.5.10">
    <property type="entry name" value="Ribosomal protein L9, N-terminal domain"/>
    <property type="match status" value="1"/>
</dbReference>
<dbReference type="HAMAP" id="MF_00503">
    <property type="entry name" value="Ribosomal_bL9"/>
    <property type="match status" value="1"/>
</dbReference>
<dbReference type="InterPro" id="IPR000244">
    <property type="entry name" value="Ribosomal_bL9"/>
</dbReference>
<dbReference type="InterPro" id="IPR009027">
    <property type="entry name" value="Ribosomal_bL9/RNase_H1_N"/>
</dbReference>
<dbReference type="InterPro" id="IPR020594">
    <property type="entry name" value="Ribosomal_bL9_bac/chp"/>
</dbReference>
<dbReference type="InterPro" id="IPR020069">
    <property type="entry name" value="Ribosomal_bL9_C"/>
</dbReference>
<dbReference type="InterPro" id="IPR036791">
    <property type="entry name" value="Ribosomal_bL9_C_sf"/>
</dbReference>
<dbReference type="InterPro" id="IPR020070">
    <property type="entry name" value="Ribosomal_bL9_N"/>
</dbReference>
<dbReference type="InterPro" id="IPR036935">
    <property type="entry name" value="Ribosomal_bL9_N_sf"/>
</dbReference>
<dbReference type="NCBIfam" id="TIGR00158">
    <property type="entry name" value="L9"/>
    <property type="match status" value="1"/>
</dbReference>
<dbReference type="PANTHER" id="PTHR21368">
    <property type="entry name" value="50S RIBOSOMAL PROTEIN L9"/>
    <property type="match status" value="1"/>
</dbReference>
<dbReference type="Pfam" id="PF03948">
    <property type="entry name" value="Ribosomal_L9_C"/>
    <property type="match status" value="1"/>
</dbReference>
<dbReference type="Pfam" id="PF01281">
    <property type="entry name" value="Ribosomal_L9_N"/>
    <property type="match status" value="1"/>
</dbReference>
<dbReference type="SUPFAM" id="SSF55658">
    <property type="entry name" value="L9 N-domain-like"/>
    <property type="match status" value="1"/>
</dbReference>
<dbReference type="SUPFAM" id="SSF55653">
    <property type="entry name" value="Ribosomal protein L9 C-domain"/>
    <property type="match status" value="1"/>
</dbReference>
<dbReference type="PROSITE" id="PS00651">
    <property type="entry name" value="RIBOSOMAL_L9"/>
    <property type="match status" value="1"/>
</dbReference>
<evidence type="ECO:0000255" key="1">
    <source>
        <dbReference type="HAMAP-Rule" id="MF_00503"/>
    </source>
</evidence>
<evidence type="ECO:0000305" key="2"/>
<organism>
    <name type="scientific">Geobacter sulfurreducens (strain ATCC 51573 / DSM 12127 / PCA)</name>
    <dbReference type="NCBI Taxonomy" id="243231"/>
    <lineage>
        <taxon>Bacteria</taxon>
        <taxon>Pseudomonadati</taxon>
        <taxon>Thermodesulfobacteriota</taxon>
        <taxon>Desulfuromonadia</taxon>
        <taxon>Geobacterales</taxon>
        <taxon>Geobacteraceae</taxon>
        <taxon>Geobacter</taxon>
    </lineage>
</organism>
<protein>
    <recommendedName>
        <fullName evidence="1">Large ribosomal subunit protein bL9</fullName>
    </recommendedName>
    <alternativeName>
        <fullName evidence="2">50S ribosomal protein L9</fullName>
    </alternativeName>
</protein>
<sequence>MKVILKENVENLGHIGDIVKVAPGYARNYLIPRNFAIEATEKNAKALEHAKRQLEYKRNKVLEQARLLVAKIEGLSLSISHQAGEEGKLFGSVTNMELAELLKAQGVEIDRKKIVLAEPIKHVGEFTAVVKVHPEVAANLKVVVTKAE</sequence>
<keyword id="KW-1185">Reference proteome</keyword>
<keyword id="KW-0687">Ribonucleoprotein</keyword>
<keyword id="KW-0689">Ribosomal protein</keyword>
<keyword id="KW-0694">RNA-binding</keyword>
<keyword id="KW-0699">rRNA-binding</keyword>
<comment type="function">
    <text evidence="1">Binds to the 23S rRNA.</text>
</comment>
<comment type="similarity">
    <text evidence="1">Belongs to the bacterial ribosomal protein bL9 family.</text>
</comment>
<name>RL9_GEOSL</name>
<gene>
    <name evidence="1" type="primary">rplI</name>
    <name type="ordered locus">GSU0668</name>
</gene>
<feature type="chain" id="PRO_0000236527" description="Large ribosomal subunit protein bL9">
    <location>
        <begin position="1"/>
        <end position="148"/>
    </location>
</feature>
<reference key="1">
    <citation type="journal article" date="2003" name="Science">
        <title>Genome of Geobacter sulfurreducens: metal reduction in subsurface environments.</title>
        <authorList>
            <person name="Methe B.A."/>
            <person name="Nelson K.E."/>
            <person name="Eisen J.A."/>
            <person name="Paulsen I.T."/>
            <person name="Nelson W.C."/>
            <person name="Heidelberg J.F."/>
            <person name="Wu D."/>
            <person name="Wu M."/>
            <person name="Ward N.L."/>
            <person name="Beanan M.J."/>
            <person name="Dodson R.J."/>
            <person name="Madupu R."/>
            <person name="Brinkac L.M."/>
            <person name="Daugherty S.C."/>
            <person name="DeBoy R.T."/>
            <person name="Durkin A.S."/>
            <person name="Gwinn M.L."/>
            <person name="Kolonay J.F."/>
            <person name="Sullivan S.A."/>
            <person name="Haft D.H."/>
            <person name="Selengut J."/>
            <person name="Davidsen T.M."/>
            <person name="Zafar N."/>
            <person name="White O."/>
            <person name="Tran B."/>
            <person name="Romero C."/>
            <person name="Forberger H.A."/>
            <person name="Weidman J.F."/>
            <person name="Khouri H.M."/>
            <person name="Feldblyum T.V."/>
            <person name="Utterback T.R."/>
            <person name="Van Aken S.E."/>
            <person name="Lovley D.R."/>
            <person name="Fraser C.M."/>
        </authorList>
    </citation>
    <scope>NUCLEOTIDE SEQUENCE [LARGE SCALE GENOMIC DNA]</scope>
    <source>
        <strain>ATCC 51573 / DSM 12127 / PCA</strain>
    </source>
</reference>